<keyword id="KW-0028">Amino-acid biosynthesis</keyword>
<keyword id="KW-0057">Aromatic amino acid biosynthesis</keyword>
<keyword id="KW-0413">Isomerase</keyword>
<keyword id="KW-1185">Reference proteome</keyword>
<keyword id="KW-0822">Tryptophan biosynthesis</keyword>
<accession>Q2N9N2</accession>
<reference key="1">
    <citation type="journal article" date="2009" name="J. Bacteriol.">
        <title>Complete genome sequence of Erythrobacter litoralis HTCC2594.</title>
        <authorList>
            <person name="Oh H.M."/>
            <person name="Giovannoni S.J."/>
            <person name="Ferriera S."/>
            <person name="Johnson J."/>
            <person name="Cho J.C."/>
        </authorList>
    </citation>
    <scope>NUCLEOTIDE SEQUENCE [LARGE SCALE GENOMIC DNA]</scope>
    <source>
        <strain>HTCC2594</strain>
    </source>
</reference>
<evidence type="ECO:0000255" key="1">
    <source>
        <dbReference type="HAMAP-Rule" id="MF_00135"/>
    </source>
</evidence>
<feature type="chain" id="PRO_1000018594" description="N-(5'-phosphoribosyl)anthranilate isomerase">
    <location>
        <begin position="1"/>
        <end position="209"/>
    </location>
</feature>
<dbReference type="EC" id="5.3.1.24" evidence="1"/>
<dbReference type="EMBL" id="CP000157">
    <property type="protein sequence ID" value="ABC63609.1"/>
    <property type="molecule type" value="Genomic_DNA"/>
</dbReference>
<dbReference type="RefSeq" id="WP_011414443.1">
    <property type="nucleotide sequence ID" value="NC_007722.1"/>
</dbReference>
<dbReference type="SMR" id="Q2N9N2"/>
<dbReference type="STRING" id="314225.ELI_07585"/>
<dbReference type="KEGG" id="eli:ELI_07585"/>
<dbReference type="eggNOG" id="COG0135">
    <property type="taxonomic scope" value="Bacteria"/>
</dbReference>
<dbReference type="HOGENOM" id="CLU_076364_1_1_5"/>
<dbReference type="OrthoDB" id="9796196at2"/>
<dbReference type="UniPathway" id="UPA00035">
    <property type="reaction ID" value="UER00042"/>
</dbReference>
<dbReference type="Proteomes" id="UP000008808">
    <property type="component" value="Chromosome"/>
</dbReference>
<dbReference type="GO" id="GO:0004640">
    <property type="term" value="F:phosphoribosylanthranilate isomerase activity"/>
    <property type="evidence" value="ECO:0007669"/>
    <property type="project" value="UniProtKB-UniRule"/>
</dbReference>
<dbReference type="GO" id="GO:0000162">
    <property type="term" value="P:L-tryptophan biosynthetic process"/>
    <property type="evidence" value="ECO:0007669"/>
    <property type="project" value="UniProtKB-UniRule"/>
</dbReference>
<dbReference type="CDD" id="cd00405">
    <property type="entry name" value="PRAI"/>
    <property type="match status" value="1"/>
</dbReference>
<dbReference type="Gene3D" id="3.20.20.70">
    <property type="entry name" value="Aldolase class I"/>
    <property type="match status" value="1"/>
</dbReference>
<dbReference type="HAMAP" id="MF_00135">
    <property type="entry name" value="PRAI"/>
    <property type="match status" value="1"/>
</dbReference>
<dbReference type="InterPro" id="IPR013785">
    <property type="entry name" value="Aldolase_TIM"/>
</dbReference>
<dbReference type="InterPro" id="IPR001240">
    <property type="entry name" value="PRAI_dom"/>
</dbReference>
<dbReference type="InterPro" id="IPR011060">
    <property type="entry name" value="RibuloseP-bd_barrel"/>
</dbReference>
<dbReference type="InterPro" id="IPR044643">
    <property type="entry name" value="TrpF_fam"/>
</dbReference>
<dbReference type="NCBIfam" id="NF002295">
    <property type="entry name" value="PRK01222.1-1"/>
    <property type="match status" value="1"/>
</dbReference>
<dbReference type="PANTHER" id="PTHR42894">
    <property type="entry name" value="N-(5'-PHOSPHORIBOSYL)ANTHRANILATE ISOMERASE"/>
    <property type="match status" value="1"/>
</dbReference>
<dbReference type="PANTHER" id="PTHR42894:SF1">
    <property type="entry name" value="N-(5'-PHOSPHORIBOSYL)ANTHRANILATE ISOMERASE"/>
    <property type="match status" value="1"/>
</dbReference>
<dbReference type="Pfam" id="PF00697">
    <property type="entry name" value="PRAI"/>
    <property type="match status" value="1"/>
</dbReference>
<dbReference type="SUPFAM" id="SSF51366">
    <property type="entry name" value="Ribulose-phoshate binding barrel"/>
    <property type="match status" value="1"/>
</dbReference>
<protein>
    <recommendedName>
        <fullName evidence="1">N-(5'-phosphoribosyl)anthranilate isomerase</fullName>
        <shortName evidence="1">PRAI</shortName>
        <ecNumber evidence="1">5.3.1.24</ecNumber>
    </recommendedName>
</protein>
<gene>
    <name evidence="1" type="primary">trpF</name>
    <name type="ordered locus">ELI_07585</name>
</gene>
<comment type="catalytic activity">
    <reaction evidence="1">
        <text>N-(5-phospho-beta-D-ribosyl)anthranilate = 1-(2-carboxyphenylamino)-1-deoxy-D-ribulose 5-phosphate</text>
        <dbReference type="Rhea" id="RHEA:21540"/>
        <dbReference type="ChEBI" id="CHEBI:18277"/>
        <dbReference type="ChEBI" id="CHEBI:58613"/>
        <dbReference type="EC" id="5.3.1.24"/>
    </reaction>
</comment>
<comment type="pathway">
    <text evidence="1">Amino-acid biosynthesis; L-tryptophan biosynthesis; L-tryptophan from chorismate: step 3/5.</text>
</comment>
<comment type="similarity">
    <text evidence="1">Belongs to the TrpF family.</text>
</comment>
<name>TRPF_ERYLH</name>
<sequence length="209" mass="22364">MTMIKICGLSTPETIEAAVQAGATHVGLVHFAKSPRHVELEKAAELRALVPESVKAVLLLVNEQPEETARAIQIVKPDVVQFHGSETPQWTKAVRDQLGIEVWKALGVREAATLEKSRRYEGAVDRLLFDSPAKKLPGGNGVTFQWDVLAGFEHHTAWGLAGGLTPDNVGDAIRQTGAELVDASSGVESAPGVKDIAKIEAFCEAARNA</sequence>
<proteinExistence type="inferred from homology"/>
<organism>
    <name type="scientific">Erythrobacter litoralis (strain HTCC2594)</name>
    <dbReference type="NCBI Taxonomy" id="314225"/>
    <lineage>
        <taxon>Bacteria</taxon>
        <taxon>Pseudomonadati</taxon>
        <taxon>Pseudomonadota</taxon>
        <taxon>Alphaproteobacteria</taxon>
        <taxon>Sphingomonadales</taxon>
        <taxon>Erythrobacteraceae</taxon>
        <taxon>Erythrobacter/Porphyrobacter group</taxon>
        <taxon>Erythrobacter</taxon>
    </lineage>
</organism>